<accession>B7L723</accession>
<keyword id="KW-0007">Acetylation</keyword>
<keyword id="KW-0520">NAD</keyword>
<keyword id="KW-0560">Oxidoreductase</keyword>
<keyword id="KW-1185">Reference proteome</keyword>
<evidence type="ECO:0000255" key="1">
    <source>
        <dbReference type="HAMAP-Rule" id="MF_00196"/>
    </source>
</evidence>
<dbReference type="EC" id="1.1.1.17" evidence="1"/>
<dbReference type="EMBL" id="CU928145">
    <property type="protein sequence ID" value="CAV00580.1"/>
    <property type="molecule type" value="Genomic_DNA"/>
</dbReference>
<dbReference type="RefSeq" id="WP_000645424.1">
    <property type="nucleotide sequence ID" value="NC_011748.1"/>
</dbReference>
<dbReference type="SMR" id="B7L723"/>
<dbReference type="KEGG" id="eck:EC55989_4064"/>
<dbReference type="HOGENOM" id="CLU_036089_2_0_6"/>
<dbReference type="Proteomes" id="UP000000746">
    <property type="component" value="Chromosome"/>
</dbReference>
<dbReference type="GO" id="GO:0005829">
    <property type="term" value="C:cytosol"/>
    <property type="evidence" value="ECO:0007669"/>
    <property type="project" value="TreeGrafter"/>
</dbReference>
<dbReference type="GO" id="GO:0008926">
    <property type="term" value="F:mannitol-1-phosphate 5-dehydrogenase activity"/>
    <property type="evidence" value="ECO:0007669"/>
    <property type="project" value="UniProtKB-UniRule"/>
</dbReference>
<dbReference type="GO" id="GO:0019592">
    <property type="term" value="P:mannitol catabolic process"/>
    <property type="evidence" value="ECO:0007669"/>
    <property type="project" value="TreeGrafter"/>
</dbReference>
<dbReference type="FunFam" id="1.10.1040.10:FF:000009">
    <property type="entry name" value="Mannitol-1-phosphate 5-dehydrogenase"/>
    <property type="match status" value="1"/>
</dbReference>
<dbReference type="FunFam" id="3.40.50.720:FF:000075">
    <property type="entry name" value="Mannitol-1-phosphate 5-dehydrogenase"/>
    <property type="match status" value="1"/>
</dbReference>
<dbReference type="Gene3D" id="1.10.1040.10">
    <property type="entry name" value="N-(1-d-carboxylethyl)-l-norvaline Dehydrogenase, domain 2"/>
    <property type="match status" value="1"/>
</dbReference>
<dbReference type="Gene3D" id="3.40.50.720">
    <property type="entry name" value="NAD(P)-binding Rossmann-like Domain"/>
    <property type="match status" value="1"/>
</dbReference>
<dbReference type="HAMAP" id="MF_00196">
    <property type="entry name" value="Mannitol_dehydrog"/>
    <property type="match status" value="1"/>
</dbReference>
<dbReference type="InterPro" id="IPR008927">
    <property type="entry name" value="6-PGluconate_DH-like_C_sf"/>
</dbReference>
<dbReference type="InterPro" id="IPR013328">
    <property type="entry name" value="6PGD_dom2"/>
</dbReference>
<dbReference type="InterPro" id="IPR023028">
    <property type="entry name" value="Mannitol_1_phos_5_DH"/>
</dbReference>
<dbReference type="InterPro" id="IPR000669">
    <property type="entry name" value="Mannitol_DH"/>
</dbReference>
<dbReference type="InterPro" id="IPR013118">
    <property type="entry name" value="Mannitol_DH_C"/>
</dbReference>
<dbReference type="InterPro" id="IPR023027">
    <property type="entry name" value="Mannitol_DH_CS"/>
</dbReference>
<dbReference type="InterPro" id="IPR013131">
    <property type="entry name" value="Mannitol_DH_N"/>
</dbReference>
<dbReference type="InterPro" id="IPR036291">
    <property type="entry name" value="NAD(P)-bd_dom_sf"/>
</dbReference>
<dbReference type="NCBIfam" id="NF002646">
    <property type="entry name" value="PRK02318.1-2"/>
    <property type="match status" value="1"/>
</dbReference>
<dbReference type="NCBIfam" id="NF002647">
    <property type="entry name" value="PRK02318.1-3"/>
    <property type="match status" value="1"/>
</dbReference>
<dbReference type="NCBIfam" id="NF002648">
    <property type="entry name" value="PRK02318.1-4"/>
    <property type="match status" value="1"/>
</dbReference>
<dbReference type="NCBIfam" id="NF002650">
    <property type="entry name" value="PRK02318.2-2"/>
    <property type="match status" value="1"/>
</dbReference>
<dbReference type="NCBIfam" id="NF002652">
    <property type="entry name" value="PRK02318.2-5"/>
    <property type="match status" value="1"/>
</dbReference>
<dbReference type="PANTHER" id="PTHR30524:SF0">
    <property type="entry name" value="ALTRONATE OXIDOREDUCTASE-RELATED"/>
    <property type="match status" value="1"/>
</dbReference>
<dbReference type="PANTHER" id="PTHR30524">
    <property type="entry name" value="MANNITOL-1-PHOSPHATE 5-DEHYDROGENASE"/>
    <property type="match status" value="1"/>
</dbReference>
<dbReference type="Pfam" id="PF01232">
    <property type="entry name" value="Mannitol_dh"/>
    <property type="match status" value="1"/>
</dbReference>
<dbReference type="Pfam" id="PF08125">
    <property type="entry name" value="Mannitol_dh_C"/>
    <property type="match status" value="1"/>
</dbReference>
<dbReference type="PRINTS" id="PR00084">
    <property type="entry name" value="MTLDHDRGNASE"/>
</dbReference>
<dbReference type="SUPFAM" id="SSF48179">
    <property type="entry name" value="6-phosphogluconate dehydrogenase C-terminal domain-like"/>
    <property type="match status" value="1"/>
</dbReference>
<dbReference type="SUPFAM" id="SSF51735">
    <property type="entry name" value="NAD(P)-binding Rossmann-fold domains"/>
    <property type="match status" value="1"/>
</dbReference>
<dbReference type="PROSITE" id="PS00974">
    <property type="entry name" value="MANNITOL_DHGENASE"/>
    <property type="match status" value="1"/>
</dbReference>
<protein>
    <recommendedName>
        <fullName evidence="1">Mannitol-1-phosphate 5-dehydrogenase</fullName>
        <ecNumber evidence="1">1.1.1.17</ecNumber>
    </recommendedName>
</protein>
<organism>
    <name type="scientific">Escherichia coli (strain 55989 / EAEC)</name>
    <dbReference type="NCBI Taxonomy" id="585055"/>
    <lineage>
        <taxon>Bacteria</taxon>
        <taxon>Pseudomonadati</taxon>
        <taxon>Pseudomonadota</taxon>
        <taxon>Gammaproteobacteria</taxon>
        <taxon>Enterobacterales</taxon>
        <taxon>Enterobacteriaceae</taxon>
        <taxon>Escherichia</taxon>
    </lineage>
</organism>
<reference key="1">
    <citation type="journal article" date="2009" name="PLoS Genet.">
        <title>Organised genome dynamics in the Escherichia coli species results in highly diverse adaptive paths.</title>
        <authorList>
            <person name="Touchon M."/>
            <person name="Hoede C."/>
            <person name="Tenaillon O."/>
            <person name="Barbe V."/>
            <person name="Baeriswyl S."/>
            <person name="Bidet P."/>
            <person name="Bingen E."/>
            <person name="Bonacorsi S."/>
            <person name="Bouchier C."/>
            <person name="Bouvet O."/>
            <person name="Calteau A."/>
            <person name="Chiapello H."/>
            <person name="Clermont O."/>
            <person name="Cruveiller S."/>
            <person name="Danchin A."/>
            <person name="Diard M."/>
            <person name="Dossat C."/>
            <person name="Karoui M.E."/>
            <person name="Frapy E."/>
            <person name="Garry L."/>
            <person name="Ghigo J.M."/>
            <person name="Gilles A.M."/>
            <person name="Johnson J."/>
            <person name="Le Bouguenec C."/>
            <person name="Lescat M."/>
            <person name="Mangenot S."/>
            <person name="Martinez-Jehanne V."/>
            <person name="Matic I."/>
            <person name="Nassif X."/>
            <person name="Oztas S."/>
            <person name="Petit M.A."/>
            <person name="Pichon C."/>
            <person name="Rouy Z."/>
            <person name="Ruf C.S."/>
            <person name="Schneider D."/>
            <person name="Tourret J."/>
            <person name="Vacherie B."/>
            <person name="Vallenet D."/>
            <person name="Medigue C."/>
            <person name="Rocha E.P.C."/>
            <person name="Denamur E."/>
        </authorList>
    </citation>
    <scope>NUCLEOTIDE SEQUENCE [LARGE SCALE GENOMIC DNA]</scope>
    <source>
        <strain>55989 / EAEC</strain>
    </source>
</reference>
<comment type="catalytic activity">
    <reaction evidence="1">
        <text>D-mannitol 1-phosphate + NAD(+) = beta-D-fructose 6-phosphate + NADH + H(+)</text>
        <dbReference type="Rhea" id="RHEA:19661"/>
        <dbReference type="ChEBI" id="CHEBI:15378"/>
        <dbReference type="ChEBI" id="CHEBI:57540"/>
        <dbReference type="ChEBI" id="CHEBI:57634"/>
        <dbReference type="ChEBI" id="CHEBI:57945"/>
        <dbReference type="ChEBI" id="CHEBI:61381"/>
        <dbReference type="EC" id="1.1.1.17"/>
    </reaction>
</comment>
<comment type="similarity">
    <text evidence="1">Belongs to the mannitol dehydrogenase family.</text>
</comment>
<sequence>MKALHFGAGNIGRGFIGKLLADAGIQLTFADVNQVVLDALNARHSYQVHVVGETEQVDTVSGVNAVSSIGDDVVDLIAQVDLVTTAVGPVVLERIAPAIAKGLVKRKEQGNESPLNIIACENMVRGTTQLKGHVMNALPEDAKAWVEEHVGFVDSAVDRIVPPSASATNDPLEVTVETFSEWIVDKTQFKGALPNIPGMELTDNLMAFVERKLFTLNTGHAITAYLGKLAGHQTIRDAILDEKIRAVVKGAMEESGAVLIKRYGFDADKHAAYIQKILGRFENPYLKDDVERVGRQPLRKLSAGDRLIKPLLGTLEYSLPHKNLIQGIAGAMHFRSEDDPQAQELAALIADKGPQAALAQISGLDANSEVVSEAVTAYKAMQ</sequence>
<name>MTLD_ECO55</name>
<feature type="chain" id="PRO_1000124388" description="Mannitol-1-phosphate 5-dehydrogenase">
    <location>
        <begin position="1"/>
        <end position="382"/>
    </location>
</feature>
<feature type="binding site" evidence="1">
    <location>
        <begin position="3"/>
        <end position="14"/>
    </location>
    <ligand>
        <name>NAD(+)</name>
        <dbReference type="ChEBI" id="CHEBI:57540"/>
    </ligand>
</feature>
<feature type="modified residue" description="N6-acetyllysine" evidence="1">
    <location>
        <position position="269"/>
    </location>
</feature>
<gene>
    <name evidence="1" type="primary">mtlD</name>
    <name type="ordered locus">EC55989_4064</name>
</gene>
<proteinExistence type="inferred from homology"/>